<organism>
    <name type="scientific">Bos taurus</name>
    <name type="common">Bovine</name>
    <dbReference type="NCBI Taxonomy" id="9913"/>
    <lineage>
        <taxon>Eukaryota</taxon>
        <taxon>Metazoa</taxon>
        <taxon>Chordata</taxon>
        <taxon>Craniata</taxon>
        <taxon>Vertebrata</taxon>
        <taxon>Euteleostomi</taxon>
        <taxon>Mammalia</taxon>
        <taxon>Eutheria</taxon>
        <taxon>Laurasiatheria</taxon>
        <taxon>Artiodactyla</taxon>
        <taxon>Ruminantia</taxon>
        <taxon>Pecora</taxon>
        <taxon>Bovidae</taxon>
        <taxon>Bovinae</taxon>
        <taxon>Bos</taxon>
    </lineage>
</organism>
<sequence>MLRDTMNSWNDSQSDLCSTDHEEEEEMVFGENEDDLEEMMDLSDLPTSLFACRVHEAVFEVPEQKERFEALFTIYDDQVTFQLFKSFRRVRINFSKPEAAARARIELHETDFNGRKLKLYFAQVQMSGETRDKSYLQPPQPAKQFLISPPASPPVGWKQGGDATPVINYDLLCAVSKLGPGEKYELHAGTESTPSVVVHVCESETEEEEETKNPKQKITQTRRPEPPTAALSEPRAFDCAL</sequence>
<comment type="function">
    <text evidence="1">Inhibits calcineurin-dependent transcriptional responses by binding to the catalytic domain of calcineurin A. Could play a role during central nervous system development (By similarity).</text>
</comment>
<comment type="subunit">
    <text evidence="2">Interacts with protein phosphatase PPP3CA/calcineurin A.</text>
</comment>
<comment type="similarity">
    <text evidence="4">Belongs to the RCAN family.</text>
</comment>
<proteinExistence type="evidence at transcript level"/>
<name>RCAN3_BOVIN</name>
<reference key="1">
    <citation type="submission" date="2006-01" db="EMBL/GenBank/DDBJ databases">
        <authorList>
            <consortium name="NIH - Mammalian Gene Collection (MGC) project"/>
        </authorList>
    </citation>
    <scope>NUCLEOTIDE SEQUENCE [LARGE SCALE MRNA]</scope>
    <source>
        <strain>Hereford</strain>
        <tissue>Hypothalamus</tissue>
    </source>
</reference>
<gene>
    <name type="primary">RCAN3</name>
    <name type="synonym">DSCR1L2</name>
</gene>
<accession>Q2KIA1</accession>
<protein>
    <recommendedName>
        <fullName>Calcipressin-3</fullName>
    </recommendedName>
    <alternativeName>
        <fullName>Down syndrome candidate region 1-like protein 2</fullName>
    </alternativeName>
    <alternativeName>
        <fullName>Regulator of calcineurin 3</fullName>
    </alternativeName>
</protein>
<dbReference type="EMBL" id="BC112714">
    <property type="protein sequence ID" value="AAI12715.1"/>
    <property type="molecule type" value="mRNA"/>
</dbReference>
<dbReference type="RefSeq" id="NP_001039410.1">
    <property type="nucleotide sequence ID" value="NM_001045945.1"/>
</dbReference>
<dbReference type="RefSeq" id="XP_010800832.1">
    <property type="nucleotide sequence ID" value="XM_010802530.4"/>
</dbReference>
<dbReference type="SMR" id="Q2KIA1"/>
<dbReference type="FunCoup" id="Q2KIA1">
    <property type="interactions" value="924"/>
</dbReference>
<dbReference type="STRING" id="9913.ENSBTAP00000023194"/>
<dbReference type="PaxDb" id="9913-ENSBTAP00000023194"/>
<dbReference type="Ensembl" id="ENSBTAT00000023194.5">
    <property type="protein sequence ID" value="ENSBTAP00000023194.4"/>
    <property type="gene ID" value="ENSBTAG00000017452.6"/>
</dbReference>
<dbReference type="GeneID" id="506601"/>
<dbReference type="KEGG" id="bta:506601"/>
<dbReference type="CTD" id="11123"/>
<dbReference type="VEuPathDB" id="HostDB:ENSBTAG00000017452"/>
<dbReference type="VGNC" id="VGNC:33822">
    <property type="gene designation" value="RCAN3"/>
</dbReference>
<dbReference type="eggNOG" id="KOG4019">
    <property type="taxonomic scope" value="Eukaryota"/>
</dbReference>
<dbReference type="GeneTree" id="ENSGT00940000159501"/>
<dbReference type="HOGENOM" id="CLU_076190_0_0_1"/>
<dbReference type="InParanoid" id="Q2KIA1"/>
<dbReference type="OMA" id="DMHRERF"/>
<dbReference type="OrthoDB" id="17212at2759"/>
<dbReference type="TreeFam" id="TF313579"/>
<dbReference type="Proteomes" id="UP000009136">
    <property type="component" value="Chromosome 2"/>
</dbReference>
<dbReference type="Bgee" id="ENSBTAG00000017452">
    <property type="expression patterns" value="Expressed in oocyte and 104 other cell types or tissues"/>
</dbReference>
<dbReference type="GO" id="GO:0005737">
    <property type="term" value="C:cytoplasm"/>
    <property type="evidence" value="ECO:0000318"/>
    <property type="project" value="GO_Central"/>
</dbReference>
<dbReference type="GO" id="GO:0005634">
    <property type="term" value="C:nucleus"/>
    <property type="evidence" value="ECO:0000318"/>
    <property type="project" value="GO_Central"/>
</dbReference>
<dbReference type="GO" id="GO:0008597">
    <property type="term" value="F:calcium-dependent protein serine/threonine phosphatase regulator activity"/>
    <property type="evidence" value="ECO:0000318"/>
    <property type="project" value="GO_Central"/>
</dbReference>
<dbReference type="GO" id="GO:0003676">
    <property type="term" value="F:nucleic acid binding"/>
    <property type="evidence" value="ECO:0007669"/>
    <property type="project" value="InterPro"/>
</dbReference>
<dbReference type="GO" id="GO:0019902">
    <property type="term" value="F:phosphatase binding"/>
    <property type="evidence" value="ECO:0007669"/>
    <property type="project" value="Ensembl"/>
</dbReference>
<dbReference type="GO" id="GO:0031013">
    <property type="term" value="F:troponin I binding"/>
    <property type="evidence" value="ECO:0007669"/>
    <property type="project" value="Ensembl"/>
</dbReference>
<dbReference type="GO" id="GO:0019722">
    <property type="term" value="P:calcium-mediated signaling"/>
    <property type="evidence" value="ECO:0000318"/>
    <property type="project" value="GO_Central"/>
</dbReference>
<dbReference type="FunFam" id="3.30.70.330:FF:000092">
    <property type="entry name" value="Calcipressin-2 isoform 2"/>
    <property type="match status" value="1"/>
</dbReference>
<dbReference type="Gene3D" id="3.30.70.330">
    <property type="match status" value="1"/>
</dbReference>
<dbReference type="InterPro" id="IPR006931">
    <property type="entry name" value="Calcipressin"/>
</dbReference>
<dbReference type="InterPro" id="IPR012677">
    <property type="entry name" value="Nucleotide-bd_a/b_plait_sf"/>
</dbReference>
<dbReference type="InterPro" id="IPR035979">
    <property type="entry name" value="RBD_domain_sf"/>
</dbReference>
<dbReference type="PANTHER" id="PTHR10300">
    <property type="entry name" value="CALCIPRESSIN"/>
    <property type="match status" value="1"/>
</dbReference>
<dbReference type="PANTHER" id="PTHR10300:SF6">
    <property type="entry name" value="CALCIPRESSIN-3"/>
    <property type="match status" value="1"/>
</dbReference>
<dbReference type="Pfam" id="PF04847">
    <property type="entry name" value="Calcipressin"/>
    <property type="match status" value="1"/>
</dbReference>
<dbReference type="SUPFAM" id="SSF54928">
    <property type="entry name" value="RNA-binding domain, RBD"/>
    <property type="match status" value="1"/>
</dbReference>
<evidence type="ECO:0000250" key="1"/>
<evidence type="ECO:0000250" key="2">
    <source>
        <dbReference type="UniProtKB" id="Q9UKA8"/>
    </source>
</evidence>
<evidence type="ECO:0000256" key="3">
    <source>
        <dbReference type="SAM" id="MobiDB-lite"/>
    </source>
</evidence>
<evidence type="ECO:0000305" key="4"/>
<keyword id="KW-1185">Reference proteome</keyword>
<feature type="chain" id="PRO_0000295272" description="Calcipressin-3">
    <location>
        <begin position="1"/>
        <end position="241"/>
    </location>
</feature>
<feature type="region of interest" description="Disordered" evidence="3">
    <location>
        <begin position="1"/>
        <end position="22"/>
    </location>
</feature>
<feature type="region of interest" description="Calcineurin-binding" evidence="2">
    <location>
        <begin position="183"/>
        <end position="203"/>
    </location>
</feature>
<feature type="region of interest" description="Disordered" evidence="3">
    <location>
        <begin position="201"/>
        <end position="241"/>
    </location>
</feature>
<feature type="compositionally biased region" description="Polar residues" evidence="3">
    <location>
        <begin position="1"/>
        <end position="17"/>
    </location>
</feature>